<name>ISCS_ECO7I</name>
<comment type="function">
    <text evidence="1">Master enzyme that delivers sulfur to a number of partners involved in Fe-S cluster assembly, tRNA modification or cofactor biosynthesis. Catalyzes the removal of elemental sulfur and selenium atoms from cysteine and selenocysteine to produce alanine. Functions as a sulfur delivery protein for Fe-S cluster synthesis onto IscU, an Fe-S scaffold assembly protein, as well as other S acceptor proteins. Also functions as a selenium delivery protein in the pathway for the biosynthesis of selenophosphate.</text>
</comment>
<comment type="catalytic activity">
    <reaction evidence="1">
        <text>(sulfur carrier)-H + L-cysteine = (sulfur carrier)-SH + L-alanine</text>
        <dbReference type="Rhea" id="RHEA:43892"/>
        <dbReference type="Rhea" id="RHEA-COMP:14737"/>
        <dbReference type="Rhea" id="RHEA-COMP:14739"/>
        <dbReference type="ChEBI" id="CHEBI:29917"/>
        <dbReference type="ChEBI" id="CHEBI:35235"/>
        <dbReference type="ChEBI" id="CHEBI:57972"/>
        <dbReference type="ChEBI" id="CHEBI:64428"/>
        <dbReference type="EC" id="2.8.1.7"/>
    </reaction>
</comment>
<comment type="cofactor">
    <cofactor evidence="1">
        <name>pyridoxal 5'-phosphate</name>
        <dbReference type="ChEBI" id="CHEBI:597326"/>
    </cofactor>
</comment>
<comment type="pathway">
    <text evidence="1">Cofactor biosynthesis; iron-sulfur cluster biosynthesis.</text>
</comment>
<comment type="subunit">
    <text evidence="1">Homodimer. Forms a heterotetramer with IscU, interacts with other sulfur acceptors.</text>
</comment>
<comment type="subcellular location">
    <subcellularLocation>
        <location evidence="1">Cytoplasm</location>
    </subcellularLocation>
</comment>
<comment type="similarity">
    <text evidence="1">Belongs to the class-V pyridoxal-phosphate-dependent aminotransferase family. NifS/IscS subfamily.</text>
</comment>
<keyword id="KW-0001">2Fe-2S</keyword>
<keyword id="KW-0963">Cytoplasm</keyword>
<keyword id="KW-0408">Iron</keyword>
<keyword id="KW-0411">Iron-sulfur</keyword>
<keyword id="KW-0479">Metal-binding</keyword>
<keyword id="KW-0663">Pyridoxal phosphate</keyword>
<keyword id="KW-0808">Transferase</keyword>
<protein>
    <recommendedName>
        <fullName evidence="1">Cysteine desulfurase IscS</fullName>
        <ecNumber evidence="1">2.8.1.7</ecNumber>
    </recommendedName>
</protein>
<proteinExistence type="inferred from homology"/>
<feature type="chain" id="PRO_1000119623" description="Cysteine desulfurase IscS">
    <location>
        <begin position="1"/>
        <end position="404"/>
    </location>
</feature>
<feature type="active site" description="Cysteine persulfide intermediate" evidence="1">
    <location>
        <position position="328"/>
    </location>
</feature>
<feature type="binding site" evidence="1">
    <location>
        <begin position="75"/>
        <end position="76"/>
    </location>
    <ligand>
        <name>pyridoxal 5'-phosphate</name>
        <dbReference type="ChEBI" id="CHEBI:597326"/>
    </ligand>
</feature>
<feature type="binding site" evidence="1">
    <location>
        <position position="155"/>
    </location>
    <ligand>
        <name>pyridoxal 5'-phosphate</name>
        <dbReference type="ChEBI" id="CHEBI:597326"/>
    </ligand>
</feature>
<feature type="binding site" evidence="1">
    <location>
        <position position="183"/>
    </location>
    <ligand>
        <name>pyridoxal 5'-phosphate</name>
        <dbReference type="ChEBI" id="CHEBI:597326"/>
    </ligand>
</feature>
<feature type="binding site" evidence="1">
    <location>
        <begin position="203"/>
        <end position="205"/>
    </location>
    <ligand>
        <name>pyridoxal 5'-phosphate</name>
        <dbReference type="ChEBI" id="CHEBI:597326"/>
    </ligand>
</feature>
<feature type="binding site" evidence="1">
    <location>
        <position position="243"/>
    </location>
    <ligand>
        <name>pyridoxal 5'-phosphate</name>
        <dbReference type="ChEBI" id="CHEBI:597326"/>
    </ligand>
</feature>
<feature type="binding site" description="via persulfide group" evidence="1">
    <location>
        <position position="328"/>
    </location>
    <ligand>
        <name>[2Fe-2S] cluster</name>
        <dbReference type="ChEBI" id="CHEBI:190135"/>
        <note>ligand shared with IscU</note>
    </ligand>
</feature>
<feature type="modified residue" description="N6-(pyridoxal phosphate)lysine" evidence="1">
    <location>
        <position position="206"/>
    </location>
</feature>
<sequence length="404" mass="45090">MKLPIYLDYSATTPVDPRVAEKMMQFMTMDGTFGNPASRSHRFGWQAEEAVDIARNQIADLVGADPREIVFTSGATESDNLAIKGAANFYQKKGKHIITSKTEHKAVLDTCRQLEREGFEVTYLAPQRNGIIDLKELEAAMRDDTILVSIMHVNNEIGVVQDIAAIGEMCRARGIIYHVDATQSVGKLPIDLSQLKVDLMSFSGHKIYGPKGIGALYVRRKPRVRIEAQMHGGGHERGMRSGTLPVHQIVGMGEAYRIAKEEMATEMERLRGLRNRLWNGIKDIEEVYLNGDLEHGAPNILNVSFNYVEGESLIMALKDLAVSSGSACTSASLEPSYVLRALGLNDELAHSSIRFSLGRFTTEEEIDYTIELVRKSIGRLRDLSPLWEMYKQGVDLNSIEWAHH</sequence>
<gene>
    <name evidence="1" type="primary">iscS</name>
    <name type="ordered locus">ECIAI39_2731</name>
</gene>
<dbReference type="EC" id="2.8.1.7" evidence="1"/>
<dbReference type="EMBL" id="CU928164">
    <property type="protein sequence ID" value="CAR18853.1"/>
    <property type="molecule type" value="Genomic_DNA"/>
</dbReference>
<dbReference type="RefSeq" id="WP_001295373.1">
    <property type="nucleotide sequence ID" value="NC_011750.1"/>
</dbReference>
<dbReference type="RefSeq" id="YP_002408669.1">
    <property type="nucleotide sequence ID" value="NC_011750.1"/>
</dbReference>
<dbReference type="SMR" id="B7NRH9"/>
<dbReference type="STRING" id="585057.ECIAI39_2731"/>
<dbReference type="GeneID" id="93774606"/>
<dbReference type="KEGG" id="ect:ECIAI39_2731"/>
<dbReference type="PATRIC" id="fig|585057.6.peg.2840"/>
<dbReference type="HOGENOM" id="CLU_003433_0_2_6"/>
<dbReference type="UniPathway" id="UPA00266"/>
<dbReference type="Proteomes" id="UP000000749">
    <property type="component" value="Chromosome"/>
</dbReference>
<dbReference type="GO" id="GO:1990221">
    <property type="term" value="C:L-cysteine desulfurase complex"/>
    <property type="evidence" value="ECO:0007669"/>
    <property type="project" value="UniProtKB-ARBA"/>
</dbReference>
<dbReference type="GO" id="GO:0051537">
    <property type="term" value="F:2 iron, 2 sulfur cluster binding"/>
    <property type="evidence" value="ECO:0007669"/>
    <property type="project" value="UniProtKB-UniRule"/>
</dbReference>
<dbReference type="GO" id="GO:0031071">
    <property type="term" value="F:cysteine desulfurase activity"/>
    <property type="evidence" value="ECO:0007669"/>
    <property type="project" value="UniProtKB-UniRule"/>
</dbReference>
<dbReference type="GO" id="GO:0046872">
    <property type="term" value="F:metal ion binding"/>
    <property type="evidence" value="ECO:0007669"/>
    <property type="project" value="UniProtKB-KW"/>
</dbReference>
<dbReference type="GO" id="GO:0030170">
    <property type="term" value="F:pyridoxal phosphate binding"/>
    <property type="evidence" value="ECO:0007669"/>
    <property type="project" value="UniProtKB-UniRule"/>
</dbReference>
<dbReference type="GO" id="GO:0044571">
    <property type="term" value="P:[2Fe-2S] cluster assembly"/>
    <property type="evidence" value="ECO:0007669"/>
    <property type="project" value="UniProtKB-UniRule"/>
</dbReference>
<dbReference type="FunFam" id="3.40.640.10:FF:000003">
    <property type="entry name" value="Cysteine desulfurase IscS"/>
    <property type="match status" value="1"/>
</dbReference>
<dbReference type="FunFam" id="3.90.1150.10:FF:000002">
    <property type="entry name" value="Cysteine desulfurase IscS"/>
    <property type="match status" value="1"/>
</dbReference>
<dbReference type="Gene3D" id="3.90.1150.10">
    <property type="entry name" value="Aspartate Aminotransferase, domain 1"/>
    <property type="match status" value="1"/>
</dbReference>
<dbReference type="Gene3D" id="3.40.640.10">
    <property type="entry name" value="Type I PLP-dependent aspartate aminotransferase-like (Major domain)"/>
    <property type="match status" value="1"/>
</dbReference>
<dbReference type="HAMAP" id="MF_00331">
    <property type="entry name" value="Cys_desulf_IscS"/>
    <property type="match status" value="1"/>
</dbReference>
<dbReference type="InterPro" id="IPR000192">
    <property type="entry name" value="Aminotrans_V_dom"/>
</dbReference>
<dbReference type="InterPro" id="IPR020578">
    <property type="entry name" value="Aminotrans_V_PyrdxlP_BS"/>
</dbReference>
<dbReference type="InterPro" id="IPR010240">
    <property type="entry name" value="Cys_deSase_IscS"/>
</dbReference>
<dbReference type="InterPro" id="IPR016454">
    <property type="entry name" value="Cysteine_dSase"/>
</dbReference>
<dbReference type="InterPro" id="IPR015424">
    <property type="entry name" value="PyrdxlP-dep_Trfase"/>
</dbReference>
<dbReference type="InterPro" id="IPR015421">
    <property type="entry name" value="PyrdxlP-dep_Trfase_major"/>
</dbReference>
<dbReference type="InterPro" id="IPR015422">
    <property type="entry name" value="PyrdxlP-dep_Trfase_small"/>
</dbReference>
<dbReference type="NCBIfam" id="TIGR02006">
    <property type="entry name" value="IscS"/>
    <property type="match status" value="1"/>
</dbReference>
<dbReference type="NCBIfam" id="NF002806">
    <property type="entry name" value="PRK02948.1"/>
    <property type="match status" value="1"/>
</dbReference>
<dbReference type="NCBIfam" id="NF010611">
    <property type="entry name" value="PRK14012.1"/>
    <property type="match status" value="1"/>
</dbReference>
<dbReference type="PANTHER" id="PTHR11601:SF34">
    <property type="entry name" value="CYSTEINE DESULFURASE"/>
    <property type="match status" value="1"/>
</dbReference>
<dbReference type="PANTHER" id="PTHR11601">
    <property type="entry name" value="CYSTEINE DESULFURYLASE FAMILY MEMBER"/>
    <property type="match status" value="1"/>
</dbReference>
<dbReference type="Pfam" id="PF00266">
    <property type="entry name" value="Aminotran_5"/>
    <property type="match status" value="1"/>
</dbReference>
<dbReference type="PIRSF" id="PIRSF005572">
    <property type="entry name" value="NifS"/>
    <property type="match status" value="1"/>
</dbReference>
<dbReference type="SUPFAM" id="SSF53383">
    <property type="entry name" value="PLP-dependent transferases"/>
    <property type="match status" value="1"/>
</dbReference>
<dbReference type="PROSITE" id="PS00595">
    <property type="entry name" value="AA_TRANSFER_CLASS_5"/>
    <property type="match status" value="1"/>
</dbReference>
<evidence type="ECO:0000255" key="1">
    <source>
        <dbReference type="HAMAP-Rule" id="MF_00331"/>
    </source>
</evidence>
<reference key="1">
    <citation type="journal article" date="2009" name="PLoS Genet.">
        <title>Organised genome dynamics in the Escherichia coli species results in highly diverse adaptive paths.</title>
        <authorList>
            <person name="Touchon M."/>
            <person name="Hoede C."/>
            <person name="Tenaillon O."/>
            <person name="Barbe V."/>
            <person name="Baeriswyl S."/>
            <person name="Bidet P."/>
            <person name="Bingen E."/>
            <person name="Bonacorsi S."/>
            <person name="Bouchier C."/>
            <person name="Bouvet O."/>
            <person name="Calteau A."/>
            <person name="Chiapello H."/>
            <person name="Clermont O."/>
            <person name="Cruveiller S."/>
            <person name="Danchin A."/>
            <person name="Diard M."/>
            <person name="Dossat C."/>
            <person name="Karoui M.E."/>
            <person name="Frapy E."/>
            <person name="Garry L."/>
            <person name="Ghigo J.M."/>
            <person name="Gilles A.M."/>
            <person name="Johnson J."/>
            <person name="Le Bouguenec C."/>
            <person name="Lescat M."/>
            <person name="Mangenot S."/>
            <person name="Martinez-Jehanne V."/>
            <person name="Matic I."/>
            <person name="Nassif X."/>
            <person name="Oztas S."/>
            <person name="Petit M.A."/>
            <person name="Pichon C."/>
            <person name="Rouy Z."/>
            <person name="Ruf C.S."/>
            <person name="Schneider D."/>
            <person name="Tourret J."/>
            <person name="Vacherie B."/>
            <person name="Vallenet D."/>
            <person name="Medigue C."/>
            <person name="Rocha E.P.C."/>
            <person name="Denamur E."/>
        </authorList>
    </citation>
    <scope>NUCLEOTIDE SEQUENCE [LARGE SCALE GENOMIC DNA]</scope>
    <source>
        <strain>IAI39 / ExPEC</strain>
    </source>
</reference>
<organism>
    <name type="scientific">Escherichia coli O7:K1 (strain IAI39 / ExPEC)</name>
    <dbReference type="NCBI Taxonomy" id="585057"/>
    <lineage>
        <taxon>Bacteria</taxon>
        <taxon>Pseudomonadati</taxon>
        <taxon>Pseudomonadota</taxon>
        <taxon>Gammaproteobacteria</taxon>
        <taxon>Enterobacterales</taxon>
        <taxon>Enterobacteriaceae</taxon>
        <taxon>Escherichia</taxon>
    </lineage>
</organism>
<accession>B7NRH9</accession>